<feature type="chain" id="PRO_1000206297" description="Ion-translocating oxidoreductase complex subunit D">
    <location>
        <begin position="1"/>
        <end position="348"/>
    </location>
</feature>
<feature type="transmembrane region" description="Helical" evidence="1">
    <location>
        <begin position="20"/>
        <end position="39"/>
    </location>
</feature>
<feature type="transmembrane region" description="Helical" evidence="1">
    <location>
        <begin position="67"/>
        <end position="87"/>
    </location>
</feature>
<feature type="transmembrane region" description="Helical" evidence="1">
    <location>
        <begin position="124"/>
        <end position="144"/>
    </location>
</feature>
<feature type="transmembrane region" description="Helical" evidence="1">
    <location>
        <begin position="221"/>
        <end position="241"/>
    </location>
</feature>
<feature type="transmembrane region" description="Helical" evidence="1">
    <location>
        <begin position="244"/>
        <end position="264"/>
    </location>
</feature>
<feature type="transmembrane region" description="Helical" evidence="1">
    <location>
        <begin position="266"/>
        <end position="286"/>
    </location>
</feature>
<feature type="transmembrane region" description="Helical" evidence="1">
    <location>
        <begin position="300"/>
        <end position="320"/>
    </location>
</feature>
<feature type="modified residue" description="FMN phosphoryl threonine" evidence="1">
    <location>
        <position position="187"/>
    </location>
</feature>
<comment type="function">
    <text evidence="1">Part of a membrane-bound complex that couples electron transfer with translocation of ions across the membrane.</text>
</comment>
<comment type="cofactor">
    <cofactor evidence="1">
        <name>FMN</name>
        <dbReference type="ChEBI" id="CHEBI:58210"/>
    </cofactor>
</comment>
<comment type="subunit">
    <text evidence="1">The complex is composed of six subunits: RnfA, RnfB, RnfC, RnfD, RnfE and RnfG.</text>
</comment>
<comment type="subcellular location">
    <subcellularLocation>
        <location evidence="1">Cell inner membrane</location>
        <topology evidence="1">Multi-pass membrane protein</topology>
    </subcellularLocation>
</comment>
<comment type="similarity">
    <text evidence="1">Belongs to the NqrB/RnfD family.</text>
</comment>
<reference key="1">
    <citation type="submission" date="2009-05" db="EMBL/GenBank/DDBJ databases">
        <title>Complete sequence of Tolumonas auensis DSM 9187.</title>
        <authorList>
            <consortium name="US DOE Joint Genome Institute"/>
            <person name="Lucas S."/>
            <person name="Copeland A."/>
            <person name="Lapidus A."/>
            <person name="Glavina del Rio T."/>
            <person name="Tice H."/>
            <person name="Bruce D."/>
            <person name="Goodwin L."/>
            <person name="Pitluck S."/>
            <person name="Chertkov O."/>
            <person name="Brettin T."/>
            <person name="Detter J.C."/>
            <person name="Han C."/>
            <person name="Larimer F."/>
            <person name="Land M."/>
            <person name="Hauser L."/>
            <person name="Kyrpides N."/>
            <person name="Mikhailova N."/>
            <person name="Spring S."/>
            <person name="Beller H."/>
        </authorList>
    </citation>
    <scope>NUCLEOTIDE SEQUENCE [LARGE SCALE GENOMIC DNA]</scope>
    <source>
        <strain>DSM 9187 / NBRC 110442 / TA 4</strain>
    </source>
</reference>
<name>RNFD_TOLAT</name>
<sequence>MSFAIAVSPHGHSQKSTSSVMRLTLLALVPGIAAQCYLFGWGVLFQLGLAILTALVSEAVILRMRNYVVSASLKDSSALLTAALIAVAIPPLLPWWMVVLATAFAIIIAKQLYGGLGQNPFNPAMVGYVLLLVSFPAPMTNWMAPQAVTAQLLSPAETAAVIFQGKTSEGLTNYQLKTLVDGSTMATPLDHLKTESKRGHSVDTLVTSANFTAVSHEGWRWINLSFLAGGILLFMLRLIPWQTPVAMLGTLAAASALAHYLAPAQFAMPEIELLSGATMLGAFFIITDPVTSSTTSRGRLVFGALVGGLVFIIRHFGGYPDGVAFSVLLCNILVPLIDKYSQSRVYGH</sequence>
<accession>C4LEP4</accession>
<dbReference type="EC" id="7.-.-.-" evidence="1"/>
<dbReference type="EMBL" id="CP001616">
    <property type="protein sequence ID" value="ACQ93061.1"/>
    <property type="molecule type" value="Genomic_DNA"/>
</dbReference>
<dbReference type="RefSeq" id="WP_015878533.1">
    <property type="nucleotide sequence ID" value="NC_012691.1"/>
</dbReference>
<dbReference type="SMR" id="C4LEP4"/>
<dbReference type="STRING" id="595494.Tola_1446"/>
<dbReference type="KEGG" id="tau:Tola_1446"/>
<dbReference type="eggNOG" id="COG4658">
    <property type="taxonomic scope" value="Bacteria"/>
</dbReference>
<dbReference type="HOGENOM" id="CLU_042020_0_0_6"/>
<dbReference type="OrthoDB" id="9776359at2"/>
<dbReference type="Proteomes" id="UP000009073">
    <property type="component" value="Chromosome"/>
</dbReference>
<dbReference type="GO" id="GO:0005886">
    <property type="term" value="C:plasma membrane"/>
    <property type="evidence" value="ECO:0007669"/>
    <property type="project" value="UniProtKB-SubCell"/>
</dbReference>
<dbReference type="GO" id="GO:0022900">
    <property type="term" value="P:electron transport chain"/>
    <property type="evidence" value="ECO:0007669"/>
    <property type="project" value="UniProtKB-UniRule"/>
</dbReference>
<dbReference type="GO" id="GO:0055085">
    <property type="term" value="P:transmembrane transport"/>
    <property type="evidence" value="ECO:0007669"/>
    <property type="project" value="InterPro"/>
</dbReference>
<dbReference type="HAMAP" id="MF_00462">
    <property type="entry name" value="RsxD_RnfD"/>
    <property type="match status" value="1"/>
</dbReference>
<dbReference type="InterPro" id="IPR004338">
    <property type="entry name" value="NqrB/RnfD"/>
</dbReference>
<dbReference type="InterPro" id="IPR011303">
    <property type="entry name" value="RnfD_bac"/>
</dbReference>
<dbReference type="NCBIfam" id="NF002011">
    <property type="entry name" value="PRK00816.1"/>
    <property type="match status" value="1"/>
</dbReference>
<dbReference type="NCBIfam" id="TIGR01946">
    <property type="entry name" value="rnfD"/>
    <property type="match status" value="1"/>
</dbReference>
<dbReference type="PANTHER" id="PTHR30578">
    <property type="entry name" value="ELECTRON TRANSPORT COMPLEX PROTEIN RNFD"/>
    <property type="match status" value="1"/>
</dbReference>
<dbReference type="PANTHER" id="PTHR30578:SF0">
    <property type="entry name" value="ION-TRANSLOCATING OXIDOREDUCTASE COMPLEX SUBUNIT D"/>
    <property type="match status" value="1"/>
</dbReference>
<dbReference type="Pfam" id="PF03116">
    <property type="entry name" value="NQR2_RnfD_RnfE"/>
    <property type="match status" value="1"/>
</dbReference>
<proteinExistence type="inferred from homology"/>
<organism>
    <name type="scientific">Tolumonas auensis (strain DSM 9187 / NBRC 110442 / TA 4)</name>
    <dbReference type="NCBI Taxonomy" id="595494"/>
    <lineage>
        <taxon>Bacteria</taxon>
        <taxon>Pseudomonadati</taxon>
        <taxon>Pseudomonadota</taxon>
        <taxon>Gammaproteobacteria</taxon>
        <taxon>Aeromonadales</taxon>
        <taxon>Aeromonadaceae</taxon>
        <taxon>Tolumonas</taxon>
    </lineage>
</organism>
<gene>
    <name evidence="1" type="primary">rnfD</name>
    <name type="ordered locus">Tola_1446</name>
</gene>
<evidence type="ECO:0000255" key="1">
    <source>
        <dbReference type="HAMAP-Rule" id="MF_00462"/>
    </source>
</evidence>
<protein>
    <recommendedName>
        <fullName evidence="1">Ion-translocating oxidoreductase complex subunit D</fullName>
        <ecNumber evidence="1">7.-.-.-</ecNumber>
    </recommendedName>
    <alternativeName>
        <fullName evidence="1">Rnf electron transport complex subunit D</fullName>
    </alternativeName>
</protein>
<keyword id="KW-0997">Cell inner membrane</keyword>
<keyword id="KW-1003">Cell membrane</keyword>
<keyword id="KW-0249">Electron transport</keyword>
<keyword id="KW-0285">Flavoprotein</keyword>
<keyword id="KW-0288">FMN</keyword>
<keyword id="KW-0472">Membrane</keyword>
<keyword id="KW-0597">Phosphoprotein</keyword>
<keyword id="KW-1185">Reference proteome</keyword>
<keyword id="KW-1278">Translocase</keyword>
<keyword id="KW-0812">Transmembrane</keyword>
<keyword id="KW-1133">Transmembrane helix</keyword>
<keyword id="KW-0813">Transport</keyword>